<evidence type="ECO:0000255" key="1"/>
<sequence>MFLLSLLHFFHPSLIPSLSLSHTHSSSLPPYRLHCTALSYRDLLTKKSANFRSPIYRSHVNEKGTLTHSFRPTKDMQSGNCWFTILRKARNLLNHGILLSSNNRSFCFIIQISKINPFERFLEM</sequence>
<keyword id="KW-1185">Reference proteome</keyword>
<keyword id="KW-0732">Signal</keyword>
<name>YI36_SCHPO</name>
<accession>G2TRK4</accession>
<protein>
    <recommendedName>
        <fullName>Uncharacterized protein C1399.06</fullName>
    </recommendedName>
</protein>
<dbReference type="EMBL" id="CU329670">
    <property type="protein sequence ID" value="CCD31313.1"/>
    <property type="molecule type" value="Genomic_DNA"/>
</dbReference>
<dbReference type="RefSeq" id="XP_004001768.1">
    <property type="nucleotide sequence ID" value="XM_004001719.1"/>
</dbReference>
<dbReference type="SMR" id="G2TRK4"/>
<dbReference type="PaxDb" id="4896-SPAC1399.06.1"/>
<dbReference type="EnsemblFungi" id="SPAC1399.06.1">
    <property type="protein sequence ID" value="SPAC1399.06.1:pep"/>
    <property type="gene ID" value="SPAC1399.06"/>
</dbReference>
<dbReference type="PomBase" id="SPAC1399.06"/>
<dbReference type="VEuPathDB" id="FungiDB:SPAC1399.06"/>
<dbReference type="HOGENOM" id="CLU_2005241_0_0_1"/>
<dbReference type="InParanoid" id="G2TRK4"/>
<dbReference type="PRO" id="PR:G2TRK4"/>
<dbReference type="Proteomes" id="UP000002485">
    <property type="component" value="Chromosome I"/>
</dbReference>
<proteinExistence type="inferred from homology"/>
<organism>
    <name type="scientific">Schizosaccharomyces pombe (strain 972 / ATCC 24843)</name>
    <name type="common">Fission yeast</name>
    <dbReference type="NCBI Taxonomy" id="284812"/>
    <lineage>
        <taxon>Eukaryota</taxon>
        <taxon>Fungi</taxon>
        <taxon>Dikarya</taxon>
        <taxon>Ascomycota</taxon>
        <taxon>Taphrinomycotina</taxon>
        <taxon>Schizosaccharomycetes</taxon>
        <taxon>Schizosaccharomycetales</taxon>
        <taxon>Schizosaccharomycetaceae</taxon>
        <taxon>Schizosaccharomyces</taxon>
    </lineage>
</organism>
<gene>
    <name type="ORF">SPAC1399.06</name>
</gene>
<reference key="1">
    <citation type="journal article" date="2002" name="Nature">
        <title>The genome sequence of Schizosaccharomyces pombe.</title>
        <authorList>
            <person name="Wood V."/>
            <person name="Gwilliam R."/>
            <person name="Rajandream M.A."/>
            <person name="Lyne M.H."/>
            <person name="Lyne R."/>
            <person name="Stewart A."/>
            <person name="Sgouros J.G."/>
            <person name="Peat N."/>
            <person name="Hayles J."/>
            <person name="Baker S.G."/>
            <person name="Basham D."/>
            <person name="Bowman S."/>
            <person name="Brooks K."/>
            <person name="Brown D."/>
            <person name="Brown S."/>
            <person name="Chillingworth T."/>
            <person name="Churcher C.M."/>
            <person name="Collins M."/>
            <person name="Connor R."/>
            <person name="Cronin A."/>
            <person name="Davis P."/>
            <person name="Feltwell T."/>
            <person name="Fraser A."/>
            <person name="Gentles S."/>
            <person name="Goble A."/>
            <person name="Hamlin N."/>
            <person name="Harris D.E."/>
            <person name="Hidalgo J."/>
            <person name="Hodgson G."/>
            <person name="Holroyd S."/>
            <person name="Hornsby T."/>
            <person name="Howarth S."/>
            <person name="Huckle E.J."/>
            <person name="Hunt S."/>
            <person name="Jagels K."/>
            <person name="James K.D."/>
            <person name="Jones L."/>
            <person name="Jones M."/>
            <person name="Leather S."/>
            <person name="McDonald S."/>
            <person name="McLean J."/>
            <person name="Mooney P."/>
            <person name="Moule S."/>
            <person name="Mungall K.L."/>
            <person name="Murphy L.D."/>
            <person name="Niblett D."/>
            <person name="Odell C."/>
            <person name="Oliver K."/>
            <person name="O'Neil S."/>
            <person name="Pearson D."/>
            <person name="Quail M.A."/>
            <person name="Rabbinowitsch E."/>
            <person name="Rutherford K.M."/>
            <person name="Rutter S."/>
            <person name="Saunders D."/>
            <person name="Seeger K."/>
            <person name="Sharp S."/>
            <person name="Skelton J."/>
            <person name="Simmonds M.N."/>
            <person name="Squares R."/>
            <person name="Squares S."/>
            <person name="Stevens K."/>
            <person name="Taylor K."/>
            <person name="Taylor R.G."/>
            <person name="Tivey A."/>
            <person name="Walsh S.V."/>
            <person name="Warren T."/>
            <person name="Whitehead S."/>
            <person name="Woodward J.R."/>
            <person name="Volckaert G."/>
            <person name="Aert R."/>
            <person name="Robben J."/>
            <person name="Grymonprez B."/>
            <person name="Weltjens I."/>
            <person name="Vanstreels E."/>
            <person name="Rieger M."/>
            <person name="Schaefer M."/>
            <person name="Mueller-Auer S."/>
            <person name="Gabel C."/>
            <person name="Fuchs M."/>
            <person name="Duesterhoeft A."/>
            <person name="Fritzc C."/>
            <person name="Holzer E."/>
            <person name="Moestl D."/>
            <person name="Hilbert H."/>
            <person name="Borzym K."/>
            <person name="Langer I."/>
            <person name="Beck A."/>
            <person name="Lehrach H."/>
            <person name="Reinhardt R."/>
            <person name="Pohl T.M."/>
            <person name="Eger P."/>
            <person name="Zimmermann W."/>
            <person name="Wedler H."/>
            <person name="Wambutt R."/>
            <person name="Purnelle B."/>
            <person name="Goffeau A."/>
            <person name="Cadieu E."/>
            <person name="Dreano S."/>
            <person name="Gloux S."/>
            <person name="Lelaure V."/>
            <person name="Mottier S."/>
            <person name="Galibert F."/>
            <person name="Aves S.J."/>
            <person name="Xiang Z."/>
            <person name="Hunt C."/>
            <person name="Moore K."/>
            <person name="Hurst S.M."/>
            <person name="Lucas M."/>
            <person name="Rochet M."/>
            <person name="Gaillardin C."/>
            <person name="Tallada V.A."/>
            <person name="Garzon A."/>
            <person name="Thode G."/>
            <person name="Daga R.R."/>
            <person name="Cruzado L."/>
            <person name="Jimenez J."/>
            <person name="Sanchez M."/>
            <person name="del Rey F."/>
            <person name="Benito J."/>
            <person name="Dominguez A."/>
            <person name="Revuelta J.L."/>
            <person name="Moreno S."/>
            <person name="Armstrong J."/>
            <person name="Forsburg S.L."/>
            <person name="Cerutti L."/>
            <person name="Lowe T."/>
            <person name="McCombie W.R."/>
            <person name="Paulsen I."/>
            <person name="Potashkin J."/>
            <person name="Shpakovski G.V."/>
            <person name="Ussery D."/>
            <person name="Barrell B.G."/>
            <person name="Nurse P."/>
        </authorList>
    </citation>
    <scope>NUCLEOTIDE SEQUENCE [LARGE SCALE GENOMIC DNA]</scope>
    <source>
        <strain>972 / ATCC 24843</strain>
    </source>
</reference>
<reference key="2">
    <citation type="journal article" date="2011" name="Science">
        <title>Comparative functional genomics of the fission yeasts.</title>
        <authorList>
            <person name="Rhind N."/>
            <person name="Chen Z."/>
            <person name="Yassour M."/>
            <person name="Thompson D.A."/>
            <person name="Haas B.J."/>
            <person name="Habib N."/>
            <person name="Wapinski I."/>
            <person name="Roy S."/>
            <person name="Lin M.F."/>
            <person name="Heiman D.I."/>
            <person name="Young S.K."/>
            <person name="Furuya K."/>
            <person name="Guo Y."/>
            <person name="Pidoux A."/>
            <person name="Chen H.M."/>
            <person name="Robbertse B."/>
            <person name="Goldberg J.M."/>
            <person name="Aoki K."/>
            <person name="Bayne E.H."/>
            <person name="Berlin A.M."/>
            <person name="Desjardins C.A."/>
            <person name="Dobbs E."/>
            <person name="Dukaj L."/>
            <person name="Fan L."/>
            <person name="FitzGerald M.G."/>
            <person name="French C."/>
            <person name="Gujja S."/>
            <person name="Hansen K."/>
            <person name="Keifenheim D."/>
            <person name="Levin J.Z."/>
            <person name="Mosher R.A."/>
            <person name="Mueller C.A."/>
            <person name="Pfiffner J."/>
            <person name="Priest M."/>
            <person name="Russ C."/>
            <person name="Smialowska A."/>
            <person name="Swoboda P."/>
            <person name="Sykes S.M."/>
            <person name="Vaughn M."/>
            <person name="Vengrova S."/>
            <person name="Yoder R."/>
            <person name="Zeng Q."/>
            <person name="Allshire R."/>
            <person name="Baulcombe D."/>
            <person name="Birren B.W."/>
            <person name="Brown W."/>
            <person name="Ekwall K."/>
            <person name="Kellis M."/>
            <person name="Leatherwood J."/>
            <person name="Levin H."/>
            <person name="Margalit H."/>
            <person name="Martienssen R."/>
            <person name="Nieduszynski C.A."/>
            <person name="Spatafora J.W."/>
            <person name="Friedman N."/>
            <person name="Dalgaard J.Z."/>
            <person name="Baumann P."/>
            <person name="Niki H."/>
            <person name="Regev A."/>
            <person name="Nusbaum C."/>
        </authorList>
    </citation>
    <scope>IDENTIFICATION</scope>
</reference>
<feature type="signal peptide" evidence="1">
    <location>
        <begin position="1"/>
        <end position="21"/>
    </location>
</feature>
<feature type="chain" id="PRO_0000416639" description="Uncharacterized protein C1399.06">
    <location>
        <begin position="22"/>
        <end position="124"/>
    </location>
</feature>